<organism>
    <name type="scientific">Psychrobacter arcticus (strain DSM 17307 / VKM B-2377 / 273-4)</name>
    <dbReference type="NCBI Taxonomy" id="259536"/>
    <lineage>
        <taxon>Bacteria</taxon>
        <taxon>Pseudomonadati</taxon>
        <taxon>Pseudomonadota</taxon>
        <taxon>Gammaproteobacteria</taxon>
        <taxon>Moraxellales</taxon>
        <taxon>Moraxellaceae</taxon>
        <taxon>Psychrobacter</taxon>
    </lineage>
</organism>
<gene>
    <name evidence="1" type="primary">fadA</name>
    <name type="ordered locus">Psyc_1933</name>
</gene>
<evidence type="ECO:0000255" key="1">
    <source>
        <dbReference type="HAMAP-Rule" id="MF_01620"/>
    </source>
</evidence>
<feature type="chain" id="PRO_0000206387" description="3-ketoacyl-CoA thiolase">
    <location>
        <begin position="1"/>
        <end position="390"/>
    </location>
</feature>
<feature type="active site" description="Acyl-thioester intermediate" evidence="1">
    <location>
        <position position="95"/>
    </location>
</feature>
<feature type="active site" description="Proton acceptor" evidence="1">
    <location>
        <position position="346"/>
    </location>
</feature>
<feature type="active site" description="Proton acceptor" evidence="1">
    <location>
        <position position="376"/>
    </location>
</feature>
<protein>
    <recommendedName>
        <fullName evidence="1">3-ketoacyl-CoA thiolase</fullName>
        <ecNumber evidence="1">2.3.1.16</ecNumber>
    </recommendedName>
    <alternativeName>
        <fullName evidence="1">Acetyl-CoA acyltransferase</fullName>
    </alternativeName>
    <alternativeName>
        <fullName evidence="1">Beta-ketothiolase</fullName>
    </alternativeName>
    <alternativeName>
        <fullName evidence="1">Fatty acid oxidation complex subunit beta</fullName>
    </alternativeName>
</protein>
<accession>Q4FQC7</accession>
<keyword id="KW-0012">Acyltransferase</keyword>
<keyword id="KW-0963">Cytoplasm</keyword>
<keyword id="KW-0276">Fatty acid metabolism</keyword>
<keyword id="KW-0442">Lipid degradation</keyword>
<keyword id="KW-0443">Lipid metabolism</keyword>
<keyword id="KW-1185">Reference proteome</keyword>
<keyword id="KW-0808">Transferase</keyword>
<comment type="function">
    <text evidence="1">Catalyzes the final step of fatty acid oxidation in which acetyl-CoA is released and the CoA ester of a fatty acid two carbons shorter is formed.</text>
</comment>
<comment type="catalytic activity">
    <reaction evidence="1">
        <text>an acyl-CoA + acetyl-CoA = a 3-oxoacyl-CoA + CoA</text>
        <dbReference type="Rhea" id="RHEA:21564"/>
        <dbReference type="ChEBI" id="CHEBI:57287"/>
        <dbReference type="ChEBI" id="CHEBI:57288"/>
        <dbReference type="ChEBI" id="CHEBI:58342"/>
        <dbReference type="ChEBI" id="CHEBI:90726"/>
        <dbReference type="EC" id="2.3.1.16"/>
    </reaction>
</comment>
<comment type="pathway">
    <text evidence="1">Lipid metabolism; fatty acid beta-oxidation.</text>
</comment>
<comment type="subunit">
    <text evidence="1">Heterotetramer of two alpha chains (FadB) and two beta chains (FadA).</text>
</comment>
<comment type="subcellular location">
    <subcellularLocation>
        <location evidence="1">Cytoplasm</location>
    </subcellularLocation>
</comment>
<comment type="similarity">
    <text evidence="1">Belongs to the thiolase-like superfamily. Thiolase family.</text>
</comment>
<dbReference type="EC" id="2.3.1.16" evidence="1"/>
<dbReference type="EMBL" id="CP000082">
    <property type="protein sequence ID" value="AAZ19781.1"/>
    <property type="molecule type" value="Genomic_DNA"/>
</dbReference>
<dbReference type="RefSeq" id="WP_011281190.1">
    <property type="nucleotide sequence ID" value="NC_007204.1"/>
</dbReference>
<dbReference type="SMR" id="Q4FQC7"/>
<dbReference type="STRING" id="259536.Psyc_1933"/>
<dbReference type="KEGG" id="par:Psyc_1933"/>
<dbReference type="eggNOG" id="COG0183">
    <property type="taxonomic scope" value="Bacteria"/>
</dbReference>
<dbReference type="HOGENOM" id="CLU_031026_2_2_6"/>
<dbReference type="OrthoDB" id="8951704at2"/>
<dbReference type="UniPathway" id="UPA00659"/>
<dbReference type="Proteomes" id="UP000000546">
    <property type="component" value="Chromosome"/>
</dbReference>
<dbReference type="GO" id="GO:0005737">
    <property type="term" value="C:cytoplasm"/>
    <property type="evidence" value="ECO:0007669"/>
    <property type="project" value="UniProtKB-SubCell"/>
</dbReference>
<dbReference type="GO" id="GO:0003988">
    <property type="term" value="F:acetyl-CoA C-acyltransferase activity"/>
    <property type="evidence" value="ECO:0007669"/>
    <property type="project" value="UniProtKB-UniRule"/>
</dbReference>
<dbReference type="GO" id="GO:0006635">
    <property type="term" value="P:fatty acid beta-oxidation"/>
    <property type="evidence" value="ECO:0007669"/>
    <property type="project" value="UniProtKB-UniRule"/>
</dbReference>
<dbReference type="GO" id="GO:0010124">
    <property type="term" value="P:phenylacetate catabolic process"/>
    <property type="evidence" value="ECO:0007669"/>
    <property type="project" value="TreeGrafter"/>
</dbReference>
<dbReference type="CDD" id="cd00751">
    <property type="entry name" value="thiolase"/>
    <property type="match status" value="1"/>
</dbReference>
<dbReference type="FunFam" id="3.40.47.10:FF:000010">
    <property type="entry name" value="Acetyl-CoA acetyltransferase (Thiolase)"/>
    <property type="match status" value="1"/>
</dbReference>
<dbReference type="Gene3D" id="3.40.47.10">
    <property type="match status" value="2"/>
</dbReference>
<dbReference type="HAMAP" id="MF_01620">
    <property type="entry name" value="FadA"/>
    <property type="match status" value="1"/>
</dbReference>
<dbReference type="InterPro" id="IPR012805">
    <property type="entry name" value="FadA"/>
</dbReference>
<dbReference type="InterPro" id="IPR002155">
    <property type="entry name" value="Thiolase"/>
</dbReference>
<dbReference type="InterPro" id="IPR016039">
    <property type="entry name" value="Thiolase-like"/>
</dbReference>
<dbReference type="InterPro" id="IPR050215">
    <property type="entry name" value="Thiolase-like_sf_Thiolase"/>
</dbReference>
<dbReference type="InterPro" id="IPR020615">
    <property type="entry name" value="Thiolase_acyl_enz_int_AS"/>
</dbReference>
<dbReference type="InterPro" id="IPR020610">
    <property type="entry name" value="Thiolase_AS"/>
</dbReference>
<dbReference type="InterPro" id="IPR020617">
    <property type="entry name" value="Thiolase_C"/>
</dbReference>
<dbReference type="InterPro" id="IPR020613">
    <property type="entry name" value="Thiolase_CS"/>
</dbReference>
<dbReference type="InterPro" id="IPR020616">
    <property type="entry name" value="Thiolase_N"/>
</dbReference>
<dbReference type="NCBIfam" id="TIGR01930">
    <property type="entry name" value="AcCoA-C-Actrans"/>
    <property type="match status" value="1"/>
</dbReference>
<dbReference type="NCBIfam" id="TIGR02445">
    <property type="entry name" value="fadA"/>
    <property type="match status" value="1"/>
</dbReference>
<dbReference type="NCBIfam" id="NF006510">
    <property type="entry name" value="PRK08947.1"/>
    <property type="match status" value="1"/>
</dbReference>
<dbReference type="PANTHER" id="PTHR43853:SF11">
    <property type="entry name" value="3-KETOACYL-COA THIOLASE FADA"/>
    <property type="match status" value="1"/>
</dbReference>
<dbReference type="PANTHER" id="PTHR43853">
    <property type="entry name" value="3-KETOACYL-COA THIOLASE, PEROXISOMAL"/>
    <property type="match status" value="1"/>
</dbReference>
<dbReference type="Pfam" id="PF02803">
    <property type="entry name" value="Thiolase_C"/>
    <property type="match status" value="1"/>
</dbReference>
<dbReference type="Pfam" id="PF00108">
    <property type="entry name" value="Thiolase_N"/>
    <property type="match status" value="1"/>
</dbReference>
<dbReference type="PIRSF" id="PIRSF000429">
    <property type="entry name" value="Ac-CoA_Ac_transf"/>
    <property type="match status" value="1"/>
</dbReference>
<dbReference type="SUPFAM" id="SSF53901">
    <property type="entry name" value="Thiolase-like"/>
    <property type="match status" value="2"/>
</dbReference>
<dbReference type="PROSITE" id="PS00098">
    <property type="entry name" value="THIOLASE_1"/>
    <property type="match status" value="1"/>
</dbReference>
<dbReference type="PROSITE" id="PS00737">
    <property type="entry name" value="THIOLASE_2"/>
    <property type="match status" value="1"/>
</dbReference>
<dbReference type="PROSITE" id="PS00099">
    <property type="entry name" value="THIOLASE_3"/>
    <property type="match status" value="1"/>
</dbReference>
<name>FADA_PSYA2</name>
<sequence>MTILSPKDVVIVDGVRSAMGKTKNGMFRHVRADSMSAELVRALVERNDFDPRDVEDIIWGCVNQTLEQGLNIGRNIGLLAGIPKTAGGQTVNRLCGSSMQALHTAAAQIMTGQGDVFIIGGVEHMGHVGMMHGIDLNPEASKHYAKASNMMGLTAEMLGRMNNITREEQDAFGLESHRRAWAATTEGRFDNEIIGIEGHDAAGRLQLCTVDEVIRPDATMEQMQKLRPAFDPVSGTVTAATSSALSDGASAMLIMSAQKAKELGLKPRARIRSMAVAGCDAAIMGYGPVPATQKALKRAGMSIEDMQTIELNEAFAAQGLSVLKALNLTDKQDIVNINGGAIALGHPLGCSGARITVTLLNAMEQSDTEIGLATMCIGLGQGISTIIERV</sequence>
<reference key="1">
    <citation type="journal article" date="2010" name="Appl. Environ. Microbiol.">
        <title>The genome sequence of Psychrobacter arcticus 273-4, a psychroactive Siberian permafrost bacterium, reveals mechanisms for adaptation to low-temperature growth.</title>
        <authorList>
            <person name="Ayala-del-Rio H.L."/>
            <person name="Chain P.S."/>
            <person name="Grzymski J.J."/>
            <person name="Ponder M.A."/>
            <person name="Ivanova N."/>
            <person name="Bergholz P.W."/>
            <person name="Di Bartolo G."/>
            <person name="Hauser L."/>
            <person name="Land M."/>
            <person name="Bakermans C."/>
            <person name="Rodrigues D."/>
            <person name="Klappenbach J."/>
            <person name="Zarka D."/>
            <person name="Larimer F."/>
            <person name="Richardson P."/>
            <person name="Murray A."/>
            <person name="Thomashow M."/>
            <person name="Tiedje J.M."/>
        </authorList>
    </citation>
    <scope>NUCLEOTIDE SEQUENCE [LARGE SCALE GENOMIC DNA]</scope>
    <source>
        <strain>DSM 17307 / VKM B-2377 / 273-4</strain>
    </source>
</reference>
<proteinExistence type="inferred from homology"/>